<sequence>MNTNDFDFYLPEELIAQTPLEKRDASKLLVIDHKNKTMTDSHFDHILDELKPGDALVMNNTRVLPARLYGEKQDTHGHVELLLLKNTEGDQWEVLAKPAKRLRVGTKVSFGDGRLIATVTKELEHGGRIVEFSYDGIFLEVLESLGEMPLPPYIHEKLEDRDRYQTVYAKENGSAAAPTAGLHFTKELLEKIETKGVKLVYLTLHVGLGTFRPVSVDNLDEHEMHSEFYQLSKEAADTLNAVKESGGRIVAVGTTSIRTLETIGSKFNGELKADSGWTNIFIKPGYQFKVVDAFSTNFHLPKSTLVMLVSAFAGRDFVLEAYNHAVEERYRFFSFGDAMFVK</sequence>
<organism>
    <name type="scientific">Streptococcus agalactiae serotype Ia (strain ATCC 27591 / A909 / CDC SS700)</name>
    <dbReference type="NCBI Taxonomy" id="205921"/>
    <lineage>
        <taxon>Bacteria</taxon>
        <taxon>Bacillati</taxon>
        <taxon>Bacillota</taxon>
        <taxon>Bacilli</taxon>
        <taxon>Lactobacillales</taxon>
        <taxon>Streptococcaceae</taxon>
        <taxon>Streptococcus</taxon>
    </lineage>
</organism>
<dbReference type="EC" id="2.4.99.17" evidence="1"/>
<dbReference type="EMBL" id="CP000114">
    <property type="protein sequence ID" value="ABA45090.1"/>
    <property type="molecule type" value="Genomic_DNA"/>
</dbReference>
<dbReference type="RefSeq" id="WP_001095273.1">
    <property type="nucleotide sequence ID" value="NC_007432.1"/>
</dbReference>
<dbReference type="SMR" id="Q3K1Q9"/>
<dbReference type="KEGG" id="sak:SAK_0922"/>
<dbReference type="HOGENOM" id="CLU_039110_1_0_9"/>
<dbReference type="UniPathway" id="UPA00392"/>
<dbReference type="GO" id="GO:0005737">
    <property type="term" value="C:cytoplasm"/>
    <property type="evidence" value="ECO:0007669"/>
    <property type="project" value="UniProtKB-SubCell"/>
</dbReference>
<dbReference type="GO" id="GO:0051075">
    <property type="term" value="F:S-adenosylmethionine:tRNA ribosyltransferase-isomerase activity"/>
    <property type="evidence" value="ECO:0007669"/>
    <property type="project" value="UniProtKB-EC"/>
</dbReference>
<dbReference type="GO" id="GO:0008616">
    <property type="term" value="P:queuosine biosynthetic process"/>
    <property type="evidence" value="ECO:0007669"/>
    <property type="project" value="UniProtKB-UniRule"/>
</dbReference>
<dbReference type="GO" id="GO:0002099">
    <property type="term" value="P:tRNA wobble guanine modification"/>
    <property type="evidence" value="ECO:0007669"/>
    <property type="project" value="TreeGrafter"/>
</dbReference>
<dbReference type="FunFam" id="2.40.10.240:FF:000002">
    <property type="entry name" value="S-adenosylmethionine:tRNA ribosyltransferase-isomerase"/>
    <property type="match status" value="1"/>
</dbReference>
<dbReference type="FunFam" id="3.40.1780.10:FF:000001">
    <property type="entry name" value="S-adenosylmethionine:tRNA ribosyltransferase-isomerase"/>
    <property type="match status" value="1"/>
</dbReference>
<dbReference type="Gene3D" id="2.40.10.240">
    <property type="entry name" value="QueA-like"/>
    <property type="match status" value="1"/>
</dbReference>
<dbReference type="Gene3D" id="3.40.1780.10">
    <property type="entry name" value="QueA-like"/>
    <property type="match status" value="1"/>
</dbReference>
<dbReference type="HAMAP" id="MF_00113">
    <property type="entry name" value="QueA"/>
    <property type="match status" value="1"/>
</dbReference>
<dbReference type="InterPro" id="IPR003699">
    <property type="entry name" value="QueA"/>
</dbReference>
<dbReference type="InterPro" id="IPR042118">
    <property type="entry name" value="QueA_dom1"/>
</dbReference>
<dbReference type="InterPro" id="IPR042119">
    <property type="entry name" value="QueA_dom2"/>
</dbReference>
<dbReference type="InterPro" id="IPR036100">
    <property type="entry name" value="QueA_sf"/>
</dbReference>
<dbReference type="NCBIfam" id="NF001140">
    <property type="entry name" value="PRK00147.1"/>
    <property type="match status" value="1"/>
</dbReference>
<dbReference type="NCBIfam" id="TIGR00113">
    <property type="entry name" value="queA"/>
    <property type="match status" value="1"/>
</dbReference>
<dbReference type="PANTHER" id="PTHR30307">
    <property type="entry name" value="S-ADENOSYLMETHIONINE:TRNA RIBOSYLTRANSFERASE-ISOMERASE"/>
    <property type="match status" value="1"/>
</dbReference>
<dbReference type="PANTHER" id="PTHR30307:SF0">
    <property type="entry name" value="S-ADENOSYLMETHIONINE:TRNA RIBOSYLTRANSFERASE-ISOMERASE"/>
    <property type="match status" value="1"/>
</dbReference>
<dbReference type="Pfam" id="PF02547">
    <property type="entry name" value="Queuosine_synth"/>
    <property type="match status" value="1"/>
</dbReference>
<dbReference type="SUPFAM" id="SSF111337">
    <property type="entry name" value="QueA-like"/>
    <property type="match status" value="1"/>
</dbReference>
<name>QUEA_STRA1</name>
<keyword id="KW-0963">Cytoplasm</keyword>
<keyword id="KW-0671">Queuosine biosynthesis</keyword>
<keyword id="KW-0949">S-adenosyl-L-methionine</keyword>
<keyword id="KW-0808">Transferase</keyword>
<comment type="function">
    <text evidence="1">Transfers and isomerizes the ribose moiety from AdoMet to the 7-aminomethyl group of 7-deazaguanine (preQ1-tRNA) to give epoxyqueuosine (oQ-tRNA).</text>
</comment>
<comment type="catalytic activity">
    <reaction evidence="1">
        <text>7-aminomethyl-7-carbaguanosine(34) in tRNA + S-adenosyl-L-methionine = epoxyqueuosine(34) in tRNA + adenine + L-methionine + 2 H(+)</text>
        <dbReference type="Rhea" id="RHEA:32155"/>
        <dbReference type="Rhea" id="RHEA-COMP:10342"/>
        <dbReference type="Rhea" id="RHEA-COMP:18582"/>
        <dbReference type="ChEBI" id="CHEBI:15378"/>
        <dbReference type="ChEBI" id="CHEBI:16708"/>
        <dbReference type="ChEBI" id="CHEBI:57844"/>
        <dbReference type="ChEBI" id="CHEBI:59789"/>
        <dbReference type="ChEBI" id="CHEBI:82833"/>
        <dbReference type="ChEBI" id="CHEBI:194443"/>
        <dbReference type="EC" id="2.4.99.17"/>
    </reaction>
</comment>
<comment type="pathway">
    <text evidence="1">tRNA modification; tRNA-queuosine biosynthesis.</text>
</comment>
<comment type="subunit">
    <text evidence="1">Monomer.</text>
</comment>
<comment type="subcellular location">
    <subcellularLocation>
        <location evidence="1">Cytoplasm</location>
    </subcellularLocation>
</comment>
<comment type="similarity">
    <text evidence="1">Belongs to the QueA family.</text>
</comment>
<accession>Q3K1Q9</accession>
<proteinExistence type="inferred from homology"/>
<evidence type="ECO:0000255" key="1">
    <source>
        <dbReference type="HAMAP-Rule" id="MF_00113"/>
    </source>
</evidence>
<protein>
    <recommendedName>
        <fullName evidence="1">S-adenosylmethionine:tRNA ribosyltransferase-isomerase</fullName>
        <ecNumber evidence="1">2.4.99.17</ecNumber>
    </recommendedName>
    <alternativeName>
        <fullName evidence="1">Queuosine biosynthesis protein QueA</fullName>
    </alternativeName>
</protein>
<reference key="1">
    <citation type="journal article" date="2005" name="Proc. Natl. Acad. Sci. U.S.A.">
        <title>Genome analysis of multiple pathogenic isolates of Streptococcus agalactiae: implications for the microbial 'pan-genome'.</title>
        <authorList>
            <person name="Tettelin H."/>
            <person name="Masignani V."/>
            <person name="Cieslewicz M.J."/>
            <person name="Donati C."/>
            <person name="Medini D."/>
            <person name="Ward N.L."/>
            <person name="Angiuoli S.V."/>
            <person name="Crabtree J."/>
            <person name="Jones A.L."/>
            <person name="Durkin A.S."/>
            <person name="DeBoy R.T."/>
            <person name="Davidsen T.M."/>
            <person name="Mora M."/>
            <person name="Scarselli M."/>
            <person name="Margarit y Ros I."/>
            <person name="Peterson J.D."/>
            <person name="Hauser C.R."/>
            <person name="Sundaram J.P."/>
            <person name="Nelson W.C."/>
            <person name="Madupu R."/>
            <person name="Brinkac L.M."/>
            <person name="Dodson R.J."/>
            <person name="Rosovitz M.J."/>
            <person name="Sullivan S.A."/>
            <person name="Daugherty S.C."/>
            <person name="Haft D.H."/>
            <person name="Selengut J."/>
            <person name="Gwinn M.L."/>
            <person name="Zhou L."/>
            <person name="Zafar N."/>
            <person name="Khouri H."/>
            <person name="Radune D."/>
            <person name="Dimitrov G."/>
            <person name="Watkins K."/>
            <person name="O'Connor K.J."/>
            <person name="Smith S."/>
            <person name="Utterback T.R."/>
            <person name="White O."/>
            <person name="Rubens C.E."/>
            <person name="Grandi G."/>
            <person name="Madoff L.C."/>
            <person name="Kasper D.L."/>
            <person name="Telford J.L."/>
            <person name="Wessels M.R."/>
            <person name="Rappuoli R."/>
            <person name="Fraser C.M."/>
        </authorList>
    </citation>
    <scope>NUCLEOTIDE SEQUENCE [LARGE SCALE GENOMIC DNA]</scope>
    <source>
        <strain>ATCC 27591 / A909 / CDC SS700</strain>
    </source>
</reference>
<gene>
    <name evidence="1" type="primary">queA</name>
    <name type="ordered locus">SAK_0922</name>
</gene>
<feature type="chain" id="PRO_0000231378" description="S-adenosylmethionine:tRNA ribosyltransferase-isomerase">
    <location>
        <begin position="1"/>
        <end position="342"/>
    </location>
</feature>